<reference key="1">
    <citation type="journal article" date="2005" name="Science">
        <title>The transcriptional landscape of the mammalian genome.</title>
        <authorList>
            <person name="Carninci P."/>
            <person name="Kasukawa T."/>
            <person name="Katayama S."/>
            <person name="Gough J."/>
            <person name="Frith M.C."/>
            <person name="Maeda N."/>
            <person name="Oyama R."/>
            <person name="Ravasi T."/>
            <person name="Lenhard B."/>
            <person name="Wells C."/>
            <person name="Kodzius R."/>
            <person name="Shimokawa K."/>
            <person name="Bajic V.B."/>
            <person name="Brenner S.E."/>
            <person name="Batalov S."/>
            <person name="Forrest A.R."/>
            <person name="Zavolan M."/>
            <person name="Davis M.J."/>
            <person name="Wilming L.G."/>
            <person name="Aidinis V."/>
            <person name="Allen J.E."/>
            <person name="Ambesi-Impiombato A."/>
            <person name="Apweiler R."/>
            <person name="Aturaliya R.N."/>
            <person name="Bailey T.L."/>
            <person name="Bansal M."/>
            <person name="Baxter L."/>
            <person name="Beisel K.W."/>
            <person name="Bersano T."/>
            <person name="Bono H."/>
            <person name="Chalk A.M."/>
            <person name="Chiu K.P."/>
            <person name="Choudhary V."/>
            <person name="Christoffels A."/>
            <person name="Clutterbuck D.R."/>
            <person name="Crowe M.L."/>
            <person name="Dalla E."/>
            <person name="Dalrymple B.P."/>
            <person name="de Bono B."/>
            <person name="Della Gatta G."/>
            <person name="di Bernardo D."/>
            <person name="Down T."/>
            <person name="Engstrom P."/>
            <person name="Fagiolini M."/>
            <person name="Faulkner G."/>
            <person name="Fletcher C.F."/>
            <person name="Fukushima T."/>
            <person name="Furuno M."/>
            <person name="Futaki S."/>
            <person name="Gariboldi M."/>
            <person name="Georgii-Hemming P."/>
            <person name="Gingeras T.R."/>
            <person name="Gojobori T."/>
            <person name="Green R.E."/>
            <person name="Gustincich S."/>
            <person name="Harbers M."/>
            <person name="Hayashi Y."/>
            <person name="Hensch T.K."/>
            <person name="Hirokawa N."/>
            <person name="Hill D."/>
            <person name="Huminiecki L."/>
            <person name="Iacono M."/>
            <person name="Ikeo K."/>
            <person name="Iwama A."/>
            <person name="Ishikawa T."/>
            <person name="Jakt M."/>
            <person name="Kanapin A."/>
            <person name="Katoh M."/>
            <person name="Kawasawa Y."/>
            <person name="Kelso J."/>
            <person name="Kitamura H."/>
            <person name="Kitano H."/>
            <person name="Kollias G."/>
            <person name="Krishnan S.P."/>
            <person name="Kruger A."/>
            <person name="Kummerfeld S.K."/>
            <person name="Kurochkin I.V."/>
            <person name="Lareau L.F."/>
            <person name="Lazarevic D."/>
            <person name="Lipovich L."/>
            <person name="Liu J."/>
            <person name="Liuni S."/>
            <person name="McWilliam S."/>
            <person name="Madan Babu M."/>
            <person name="Madera M."/>
            <person name="Marchionni L."/>
            <person name="Matsuda H."/>
            <person name="Matsuzawa S."/>
            <person name="Miki H."/>
            <person name="Mignone F."/>
            <person name="Miyake S."/>
            <person name="Morris K."/>
            <person name="Mottagui-Tabar S."/>
            <person name="Mulder N."/>
            <person name="Nakano N."/>
            <person name="Nakauchi H."/>
            <person name="Ng P."/>
            <person name="Nilsson R."/>
            <person name="Nishiguchi S."/>
            <person name="Nishikawa S."/>
            <person name="Nori F."/>
            <person name="Ohara O."/>
            <person name="Okazaki Y."/>
            <person name="Orlando V."/>
            <person name="Pang K.C."/>
            <person name="Pavan W.J."/>
            <person name="Pavesi G."/>
            <person name="Pesole G."/>
            <person name="Petrovsky N."/>
            <person name="Piazza S."/>
            <person name="Reed J."/>
            <person name="Reid J.F."/>
            <person name="Ring B.Z."/>
            <person name="Ringwald M."/>
            <person name="Rost B."/>
            <person name="Ruan Y."/>
            <person name="Salzberg S.L."/>
            <person name="Sandelin A."/>
            <person name="Schneider C."/>
            <person name="Schoenbach C."/>
            <person name="Sekiguchi K."/>
            <person name="Semple C.A."/>
            <person name="Seno S."/>
            <person name="Sessa L."/>
            <person name="Sheng Y."/>
            <person name="Shibata Y."/>
            <person name="Shimada H."/>
            <person name="Shimada K."/>
            <person name="Silva D."/>
            <person name="Sinclair B."/>
            <person name="Sperling S."/>
            <person name="Stupka E."/>
            <person name="Sugiura K."/>
            <person name="Sultana R."/>
            <person name="Takenaka Y."/>
            <person name="Taki K."/>
            <person name="Tammoja K."/>
            <person name="Tan S.L."/>
            <person name="Tang S."/>
            <person name="Taylor M.S."/>
            <person name="Tegner J."/>
            <person name="Teichmann S.A."/>
            <person name="Ueda H.R."/>
            <person name="van Nimwegen E."/>
            <person name="Verardo R."/>
            <person name="Wei C.L."/>
            <person name="Yagi K."/>
            <person name="Yamanishi H."/>
            <person name="Zabarovsky E."/>
            <person name="Zhu S."/>
            <person name="Zimmer A."/>
            <person name="Hide W."/>
            <person name="Bult C."/>
            <person name="Grimmond S.M."/>
            <person name="Teasdale R.D."/>
            <person name="Liu E.T."/>
            <person name="Brusic V."/>
            <person name="Quackenbush J."/>
            <person name="Wahlestedt C."/>
            <person name="Mattick J.S."/>
            <person name="Hume D.A."/>
            <person name="Kai C."/>
            <person name="Sasaki D."/>
            <person name="Tomaru Y."/>
            <person name="Fukuda S."/>
            <person name="Kanamori-Katayama M."/>
            <person name="Suzuki M."/>
            <person name="Aoki J."/>
            <person name="Arakawa T."/>
            <person name="Iida J."/>
            <person name="Imamura K."/>
            <person name="Itoh M."/>
            <person name="Kato T."/>
            <person name="Kawaji H."/>
            <person name="Kawagashira N."/>
            <person name="Kawashima T."/>
            <person name="Kojima M."/>
            <person name="Kondo S."/>
            <person name="Konno H."/>
            <person name="Nakano K."/>
            <person name="Ninomiya N."/>
            <person name="Nishio T."/>
            <person name="Okada M."/>
            <person name="Plessy C."/>
            <person name="Shibata K."/>
            <person name="Shiraki T."/>
            <person name="Suzuki S."/>
            <person name="Tagami M."/>
            <person name="Waki K."/>
            <person name="Watahiki A."/>
            <person name="Okamura-Oho Y."/>
            <person name="Suzuki H."/>
            <person name="Kawai J."/>
            <person name="Hayashizaki Y."/>
        </authorList>
    </citation>
    <scope>NUCLEOTIDE SEQUENCE [LARGE SCALE MRNA] (ISOFORMS 1 AND 2)</scope>
    <source>
        <strain>C57BL/6J</strain>
        <tissue>Cerebellum</tissue>
        <tissue>Embryoid bodies</tissue>
        <tissue>Kidney</tissue>
        <tissue>Thymus</tissue>
    </source>
</reference>
<reference key="2">
    <citation type="journal article" date="2004" name="Genome Res.">
        <title>The status, quality, and expansion of the NIH full-length cDNA project: the Mammalian Gene Collection (MGC).</title>
        <authorList>
            <consortium name="The MGC Project Team"/>
        </authorList>
    </citation>
    <scope>NUCLEOTIDE SEQUENCE [LARGE SCALE MRNA] (ISOFORM 1)</scope>
    <source>
        <strain>FVB/N</strain>
        <tissue>Kidney</tissue>
    </source>
</reference>
<reference key="3">
    <citation type="journal article" date="2010" name="Cell">
        <title>A tissue-specific atlas of mouse protein phosphorylation and expression.</title>
        <authorList>
            <person name="Huttlin E.L."/>
            <person name="Jedrychowski M.P."/>
            <person name="Elias J.E."/>
            <person name="Goswami T."/>
            <person name="Rad R."/>
            <person name="Beausoleil S.A."/>
            <person name="Villen J."/>
            <person name="Haas W."/>
            <person name="Sowa M.E."/>
            <person name="Gygi S.P."/>
        </authorList>
    </citation>
    <scope>IDENTIFICATION BY MASS SPECTROMETRY [LARGE SCALE ANALYSIS]</scope>
    <source>
        <tissue>Kidney</tissue>
        <tissue>Liver</tissue>
    </source>
</reference>
<keyword id="KW-0025">Alternative splicing</keyword>
<keyword id="KW-0963">Cytoplasm</keyword>
<keyword id="KW-0418">Kinase</keyword>
<keyword id="KW-1185">Reference proteome</keyword>
<keyword id="KW-0808">Transferase</keyword>
<proteinExistence type="evidence at protein level"/>
<dbReference type="EC" id="2.7.1.81"/>
<dbReference type="EMBL" id="AK085527">
    <property type="protein sequence ID" value="BAC39464.1"/>
    <property type="molecule type" value="mRNA"/>
</dbReference>
<dbReference type="EMBL" id="AK138851">
    <property type="protein sequence ID" value="BAE23801.1"/>
    <property type="molecule type" value="mRNA"/>
</dbReference>
<dbReference type="EMBL" id="AK162425">
    <property type="protein sequence ID" value="BAE36908.1"/>
    <property type="molecule type" value="mRNA"/>
</dbReference>
<dbReference type="EMBL" id="AK163926">
    <property type="protein sequence ID" value="BAE37537.1"/>
    <property type="molecule type" value="mRNA"/>
</dbReference>
<dbReference type="EMBL" id="BC038618">
    <property type="protein sequence ID" value="AAH38618.1"/>
    <property type="molecule type" value="mRNA"/>
</dbReference>
<dbReference type="CCDS" id="CCDS23197.1">
    <molecule id="Q5U5V2-1"/>
</dbReference>
<dbReference type="RefSeq" id="NP_796325.2">
    <molecule id="Q5U5V2-1"/>
    <property type="nucleotide sequence ID" value="NM_177351.4"/>
</dbReference>
<dbReference type="SMR" id="Q5U5V2"/>
<dbReference type="FunCoup" id="Q5U5V2">
    <property type="interactions" value="88"/>
</dbReference>
<dbReference type="STRING" id="10090.ENSMUSP00000039980"/>
<dbReference type="iPTMnet" id="Q5U5V2"/>
<dbReference type="PhosphoSitePlus" id="Q5U5V2"/>
<dbReference type="SwissPalm" id="Q5U5V2"/>
<dbReference type="jPOST" id="Q5U5V2"/>
<dbReference type="PaxDb" id="10090-ENSMUSP00000039980"/>
<dbReference type="PeptideAtlas" id="Q5U5V2"/>
<dbReference type="ProteomicsDB" id="273241">
    <molecule id="Q5U5V2-1"/>
</dbReference>
<dbReference type="ProteomicsDB" id="273242">
    <molecule id="Q5U5V2-2"/>
</dbReference>
<dbReference type="Pumba" id="Q5U5V2"/>
<dbReference type="Antibodypedia" id="51728">
    <property type="antibodies" value="38 antibodies from 13 providers"/>
</dbReference>
<dbReference type="Ensembl" id="ENSMUST00000039742.8">
    <molecule id="Q5U5V2-1"/>
    <property type="protein sequence ID" value="ENSMUSP00000039980.8"/>
    <property type="gene ID" value="ENSMUSG00000035878.14"/>
</dbReference>
<dbReference type="GeneID" id="235386"/>
<dbReference type="KEGG" id="mmu:235386"/>
<dbReference type="UCSC" id="uc009prr.2">
    <molecule id="Q5U5V2-2"/>
    <property type="organism name" value="mouse"/>
</dbReference>
<dbReference type="UCSC" id="uc009prs.2">
    <molecule id="Q5U5V2-1"/>
    <property type="organism name" value="mouse"/>
</dbReference>
<dbReference type="AGR" id="MGI:2443139"/>
<dbReference type="CTD" id="123688"/>
<dbReference type="MGI" id="MGI:2443139">
    <property type="gene designation" value="Hykk"/>
</dbReference>
<dbReference type="VEuPathDB" id="HostDB:ENSMUSG00000035878"/>
<dbReference type="eggNOG" id="ENOG502QT7T">
    <property type="taxonomic scope" value="Eukaryota"/>
</dbReference>
<dbReference type="GeneTree" id="ENSGT00390000011314"/>
<dbReference type="HOGENOM" id="CLU_042971_1_1_1"/>
<dbReference type="InParanoid" id="Q5U5V2"/>
<dbReference type="OMA" id="AAHSCQL"/>
<dbReference type="OrthoDB" id="9973935at2759"/>
<dbReference type="PhylomeDB" id="Q5U5V2"/>
<dbReference type="TreeFam" id="TF324471"/>
<dbReference type="Reactome" id="R-MMU-71064">
    <property type="pathway name" value="Lysine catabolism"/>
</dbReference>
<dbReference type="BioGRID-ORCS" id="235386">
    <property type="hits" value="3 hits in 75 CRISPR screens"/>
</dbReference>
<dbReference type="ChiTaRS" id="Hykk">
    <property type="organism name" value="mouse"/>
</dbReference>
<dbReference type="PRO" id="PR:Q5U5V2"/>
<dbReference type="Proteomes" id="UP000000589">
    <property type="component" value="Chromosome 9"/>
</dbReference>
<dbReference type="RNAct" id="Q5U5V2">
    <property type="molecule type" value="protein"/>
</dbReference>
<dbReference type="Bgee" id="ENSMUSG00000035878">
    <property type="expression patterns" value="Expressed in adult mammalian kidney and 172 other cell types or tissues"/>
</dbReference>
<dbReference type="GO" id="GO:0005737">
    <property type="term" value="C:cytoplasm"/>
    <property type="evidence" value="ECO:0007669"/>
    <property type="project" value="UniProtKB-SubCell"/>
</dbReference>
<dbReference type="GO" id="GO:0047992">
    <property type="term" value="F:hydroxylysine kinase activity"/>
    <property type="evidence" value="ECO:0007669"/>
    <property type="project" value="UniProtKB-EC"/>
</dbReference>
<dbReference type="FunFam" id="3.30.200.20:FF:000549">
    <property type="entry name" value="hydroxylysine kinase"/>
    <property type="match status" value="1"/>
</dbReference>
<dbReference type="FunFam" id="3.90.1200.10:FF:000007">
    <property type="entry name" value="hydroxylysine kinase isoform X1"/>
    <property type="match status" value="1"/>
</dbReference>
<dbReference type="Gene3D" id="3.90.1200.10">
    <property type="match status" value="1"/>
</dbReference>
<dbReference type="Gene3D" id="3.30.200.20">
    <property type="entry name" value="Phosphorylase Kinase, domain 1"/>
    <property type="match status" value="1"/>
</dbReference>
<dbReference type="InterPro" id="IPR002575">
    <property type="entry name" value="Aminoglycoside_PTrfase"/>
</dbReference>
<dbReference type="InterPro" id="IPR011009">
    <property type="entry name" value="Kinase-like_dom_sf"/>
</dbReference>
<dbReference type="InterPro" id="IPR050249">
    <property type="entry name" value="Pseudomonas-type_ThrB"/>
</dbReference>
<dbReference type="PANTHER" id="PTHR21064">
    <property type="entry name" value="AMINOGLYCOSIDE PHOSPHOTRANSFERASE DOMAIN-CONTAINING PROTEIN-RELATED"/>
    <property type="match status" value="1"/>
</dbReference>
<dbReference type="PANTHER" id="PTHR21064:SF1">
    <property type="entry name" value="HYDROXYLYSINE KINASE"/>
    <property type="match status" value="1"/>
</dbReference>
<dbReference type="Pfam" id="PF01636">
    <property type="entry name" value="APH"/>
    <property type="match status" value="1"/>
</dbReference>
<dbReference type="SUPFAM" id="SSF56112">
    <property type="entry name" value="Protein kinase-like (PK-like)"/>
    <property type="match status" value="1"/>
</dbReference>
<comment type="function">
    <text evidence="1">Catalyzes the GTP-dependent phosphorylation of 5-hydroxy-L-lysine.</text>
</comment>
<comment type="catalytic activity">
    <reaction>
        <text>(5R)-5-hydroxy-L-lysine + GTP = (5R)-5-phosphooxy-L-lysine + GDP + H(+)</text>
        <dbReference type="Rhea" id="RHEA:19049"/>
        <dbReference type="ChEBI" id="CHEBI:15378"/>
        <dbReference type="ChEBI" id="CHEBI:37565"/>
        <dbReference type="ChEBI" id="CHEBI:57882"/>
        <dbReference type="ChEBI" id="CHEBI:58189"/>
        <dbReference type="ChEBI" id="CHEBI:58357"/>
        <dbReference type="EC" id="2.7.1.81"/>
    </reaction>
</comment>
<comment type="subcellular location">
    <subcellularLocation>
        <location evidence="3">Cytoplasm</location>
    </subcellularLocation>
</comment>
<comment type="alternative products">
    <event type="alternative splicing"/>
    <isoform>
        <id>Q5U5V2-1</id>
        <name>1</name>
        <sequence type="displayed"/>
    </isoform>
    <isoform>
        <id>Q5U5V2-2</id>
        <name>2</name>
        <sequence type="described" ref="VSP_032521 VSP_032522"/>
    </isoform>
</comment>
<comment type="similarity">
    <text evidence="3">Belongs to the aminoglycoside phosphotransferase family.</text>
</comment>
<sequence length="376" mass="42357">MSSGAGWQSQASAKPVFTEAQASALVESVFGFKVSKIQPLPSYEDQNFRVHIARGKETTDDPVEYVLKISNTESSQTPELIEMQNHVIMFLRAAGFPTASVCRTKGDNTISLISIDSGSGVKSYLVRMLTYLPGRPIAEVAISHQQLYEIGRLAAQLDKALEEFHHPKLSLFHRENFIWNLKNVPLLEKYMGALSQSRNREIVEQVIRMFKEEVMTKLSHFRECINHGDLNDHNILVDLSKSASGEGVHQVSGILDFGDMSYGYYVFEVAIVIMYMMIESTNPIQVGGHILAGFESVIPLTAVERQALFLLVCSRFSQSLVMAAYSCQLYPENKEYLMITAKTGWKHLQQLFDMGQKAVEEIWFETAKSYESEISM</sequence>
<accession>Q5U5V2</accession>
<accession>Q3TQ48</accession>
<accession>Q3TRW8</accession>
<accession>Q3UU28</accession>
<accession>Q8C3L8</accession>
<feature type="chain" id="PRO_0000326045" description="Hydroxylysine kinase">
    <location>
        <begin position="1"/>
        <end position="376"/>
    </location>
</feature>
<feature type="active site" description="Proton acceptor" evidence="1">
    <location>
        <position position="229"/>
    </location>
</feature>
<feature type="splice variant" id="VSP_032521" description="In isoform 2." evidence="2">
    <original>E</original>
    <variation>L</variation>
    <location>
        <position position="163"/>
    </location>
</feature>
<feature type="splice variant" id="VSP_032522" description="In isoform 2." evidence="2">
    <location>
        <begin position="164"/>
        <end position="376"/>
    </location>
</feature>
<feature type="sequence conflict" description="In Ref. 1; BAC39464." evidence="3" ref="1">
    <original>Q</original>
    <variation>P</variation>
    <location>
        <position position="46"/>
    </location>
</feature>
<feature type="sequence conflict" description="In Ref. 1; BAC39464." evidence="3" ref="1">
    <original>Q</original>
    <variation>P</variation>
    <location>
        <position position="76"/>
    </location>
</feature>
<feature type="sequence conflict" description="In Ref. 1; BAC39464." evidence="3" ref="1">
    <original>K</original>
    <variation>Q</variation>
    <location>
        <position position="217"/>
    </location>
</feature>
<feature type="sequence conflict" description="In Ref. 1; BAE23801." evidence="3" ref="1">
    <original>L</original>
    <variation>S</variation>
    <location>
        <position position="236"/>
    </location>
</feature>
<feature type="sequence conflict" description="In Ref. 2; AAH38618." evidence="3" ref="2">
    <original>L</original>
    <variation>F</variation>
    <location>
        <position position="239"/>
    </location>
</feature>
<organism>
    <name type="scientific">Mus musculus</name>
    <name type="common">Mouse</name>
    <dbReference type="NCBI Taxonomy" id="10090"/>
    <lineage>
        <taxon>Eukaryota</taxon>
        <taxon>Metazoa</taxon>
        <taxon>Chordata</taxon>
        <taxon>Craniata</taxon>
        <taxon>Vertebrata</taxon>
        <taxon>Euteleostomi</taxon>
        <taxon>Mammalia</taxon>
        <taxon>Eutheria</taxon>
        <taxon>Euarchontoglires</taxon>
        <taxon>Glires</taxon>
        <taxon>Rodentia</taxon>
        <taxon>Myomorpha</taxon>
        <taxon>Muroidea</taxon>
        <taxon>Muridae</taxon>
        <taxon>Murinae</taxon>
        <taxon>Mus</taxon>
        <taxon>Mus</taxon>
    </lineage>
</organism>
<evidence type="ECO:0000250" key="1"/>
<evidence type="ECO:0000303" key="2">
    <source>
    </source>
</evidence>
<evidence type="ECO:0000305" key="3"/>
<name>HYKK_MOUSE</name>
<protein>
    <recommendedName>
        <fullName>Hydroxylysine kinase</fullName>
        <shortName>5-hydroxy-L-lysine kinase</shortName>
        <ecNumber>2.7.1.81</ecNumber>
    </recommendedName>
    <alternativeName>
        <fullName>Aminoglycoside phosphotransferase domain-containing protein 1</fullName>
    </alternativeName>
</protein>
<gene>
    <name type="primary">Hykk</name>
    <name type="synonym">Agphd1</name>
</gene>